<keyword id="KW-0030">Aminoacyl-tRNA synthetase</keyword>
<keyword id="KW-0067">ATP-binding</keyword>
<keyword id="KW-0963">Cytoplasm</keyword>
<keyword id="KW-0436">Ligase</keyword>
<keyword id="KW-0547">Nucleotide-binding</keyword>
<keyword id="KW-0648">Protein biosynthesis</keyword>
<keyword id="KW-1185">Reference proteome</keyword>
<keyword id="KW-0694">RNA-binding</keyword>
<dbReference type="EC" id="6.1.1.1" evidence="1"/>
<dbReference type="EMBL" id="AE006470">
    <property type="protein sequence ID" value="AAM71805.1"/>
    <property type="molecule type" value="Genomic_DNA"/>
</dbReference>
<dbReference type="RefSeq" id="NP_661463.1">
    <property type="nucleotide sequence ID" value="NC_002932.3"/>
</dbReference>
<dbReference type="RefSeq" id="WP_010932250.1">
    <property type="nucleotide sequence ID" value="NC_002932.3"/>
</dbReference>
<dbReference type="SMR" id="Q8KEW9"/>
<dbReference type="STRING" id="194439.CT0563"/>
<dbReference type="EnsemblBacteria" id="AAM71805">
    <property type="protein sequence ID" value="AAM71805"/>
    <property type="gene ID" value="CT0563"/>
</dbReference>
<dbReference type="KEGG" id="cte:CT0563"/>
<dbReference type="PATRIC" id="fig|194439.7.peg.527"/>
<dbReference type="eggNOG" id="COG0162">
    <property type="taxonomic scope" value="Bacteria"/>
</dbReference>
<dbReference type="HOGENOM" id="CLU_024003_5_0_10"/>
<dbReference type="OrthoDB" id="9804243at2"/>
<dbReference type="Proteomes" id="UP000001007">
    <property type="component" value="Chromosome"/>
</dbReference>
<dbReference type="GO" id="GO:0005829">
    <property type="term" value="C:cytosol"/>
    <property type="evidence" value="ECO:0007669"/>
    <property type="project" value="TreeGrafter"/>
</dbReference>
<dbReference type="GO" id="GO:0005524">
    <property type="term" value="F:ATP binding"/>
    <property type="evidence" value="ECO:0007669"/>
    <property type="project" value="UniProtKB-UniRule"/>
</dbReference>
<dbReference type="GO" id="GO:0003723">
    <property type="term" value="F:RNA binding"/>
    <property type="evidence" value="ECO:0007669"/>
    <property type="project" value="UniProtKB-KW"/>
</dbReference>
<dbReference type="GO" id="GO:0004831">
    <property type="term" value="F:tyrosine-tRNA ligase activity"/>
    <property type="evidence" value="ECO:0007669"/>
    <property type="project" value="UniProtKB-UniRule"/>
</dbReference>
<dbReference type="GO" id="GO:0006437">
    <property type="term" value="P:tyrosyl-tRNA aminoacylation"/>
    <property type="evidence" value="ECO:0007669"/>
    <property type="project" value="UniProtKB-UniRule"/>
</dbReference>
<dbReference type="CDD" id="cd00165">
    <property type="entry name" value="S4"/>
    <property type="match status" value="1"/>
</dbReference>
<dbReference type="CDD" id="cd00805">
    <property type="entry name" value="TyrRS_core"/>
    <property type="match status" value="1"/>
</dbReference>
<dbReference type="FunFam" id="3.40.50.620:FF:000061">
    <property type="entry name" value="Tyrosine--tRNA ligase"/>
    <property type="match status" value="1"/>
</dbReference>
<dbReference type="Gene3D" id="3.40.50.620">
    <property type="entry name" value="HUPs"/>
    <property type="match status" value="1"/>
</dbReference>
<dbReference type="Gene3D" id="3.10.290.10">
    <property type="entry name" value="RNA-binding S4 domain"/>
    <property type="match status" value="1"/>
</dbReference>
<dbReference type="Gene3D" id="1.10.240.10">
    <property type="entry name" value="Tyrosyl-Transfer RNA Synthetase"/>
    <property type="match status" value="1"/>
</dbReference>
<dbReference type="HAMAP" id="MF_02007">
    <property type="entry name" value="Tyr_tRNA_synth_type2"/>
    <property type="match status" value="1"/>
</dbReference>
<dbReference type="InterPro" id="IPR002305">
    <property type="entry name" value="aa-tRNA-synth_Ic"/>
</dbReference>
<dbReference type="InterPro" id="IPR014729">
    <property type="entry name" value="Rossmann-like_a/b/a_fold"/>
</dbReference>
<dbReference type="InterPro" id="IPR036986">
    <property type="entry name" value="S4_RNA-bd_sf"/>
</dbReference>
<dbReference type="InterPro" id="IPR054608">
    <property type="entry name" value="SYY-like_C"/>
</dbReference>
<dbReference type="InterPro" id="IPR002307">
    <property type="entry name" value="Tyr-tRNA-ligase"/>
</dbReference>
<dbReference type="InterPro" id="IPR024088">
    <property type="entry name" value="Tyr-tRNA-ligase_bac-type"/>
</dbReference>
<dbReference type="InterPro" id="IPR024108">
    <property type="entry name" value="Tyr-tRNA-ligase_bac_2"/>
</dbReference>
<dbReference type="NCBIfam" id="TIGR00234">
    <property type="entry name" value="tyrS"/>
    <property type="match status" value="1"/>
</dbReference>
<dbReference type="PANTHER" id="PTHR11766:SF1">
    <property type="entry name" value="TYROSINE--TRNA LIGASE"/>
    <property type="match status" value="1"/>
</dbReference>
<dbReference type="PANTHER" id="PTHR11766">
    <property type="entry name" value="TYROSYL-TRNA SYNTHETASE"/>
    <property type="match status" value="1"/>
</dbReference>
<dbReference type="Pfam" id="PF22421">
    <property type="entry name" value="SYY_C-terminal"/>
    <property type="match status" value="1"/>
</dbReference>
<dbReference type="Pfam" id="PF00579">
    <property type="entry name" value="tRNA-synt_1b"/>
    <property type="match status" value="1"/>
</dbReference>
<dbReference type="PRINTS" id="PR01040">
    <property type="entry name" value="TRNASYNTHTYR"/>
</dbReference>
<dbReference type="SUPFAM" id="SSF55174">
    <property type="entry name" value="Alpha-L RNA-binding motif"/>
    <property type="match status" value="1"/>
</dbReference>
<dbReference type="SUPFAM" id="SSF52374">
    <property type="entry name" value="Nucleotidylyl transferase"/>
    <property type="match status" value="1"/>
</dbReference>
<dbReference type="PROSITE" id="PS50889">
    <property type="entry name" value="S4"/>
    <property type="match status" value="1"/>
</dbReference>
<organism>
    <name type="scientific">Chlorobaculum tepidum (strain ATCC 49652 / DSM 12025 / NBRC 103806 / TLS)</name>
    <name type="common">Chlorobium tepidum</name>
    <dbReference type="NCBI Taxonomy" id="194439"/>
    <lineage>
        <taxon>Bacteria</taxon>
        <taxon>Pseudomonadati</taxon>
        <taxon>Chlorobiota</taxon>
        <taxon>Chlorobiia</taxon>
        <taxon>Chlorobiales</taxon>
        <taxon>Chlorobiaceae</taxon>
        <taxon>Chlorobaculum</taxon>
    </lineage>
</organism>
<name>SYY_CHLTE</name>
<sequence length="406" mass="45724">MIFPSVKEQLDIIVNNTVEVISTDELERKLTKSLKNGTPLKIKLGADPSRPDLHLGHSVVLRKLREFQDLGHEAILIIGDFTAMIGDPSGKSKTRPQLTAEEARENGKSYFEQASKILDPEKTTICYNADWLSQMHFADVIRLSSHYTVARMLERDDFEKRYRSQTPISIHEFLYPLAQGMDSVHLKNDVELGGTDQKFNLLVGRDLQREYGIEPQVCITMPLLVGTDGSEKMSKSLGNAICFNDTPEDMYGRTLSIPDSLIETYWNLLVPHHSGNDKPIAERIAADPRETKRELARELVAQYYSAEEAAKAQEHFDRVIVNKQAPTDLPTVEFEEATMPVVELLMALAAFPSKNEARRMIQQGAVQAGNEKISDINAVIELTENPVIIRAGKRKFFKVARAKKSF</sequence>
<proteinExistence type="inferred from homology"/>
<gene>
    <name evidence="1" type="primary">tyrS</name>
    <name type="ordered locus">CT0563</name>
</gene>
<protein>
    <recommendedName>
        <fullName evidence="1">Tyrosine--tRNA ligase</fullName>
        <ecNumber evidence="1">6.1.1.1</ecNumber>
    </recommendedName>
    <alternativeName>
        <fullName evidence="1">Tyrosyl-tRNA synthetase</fullName>
        <shortName evidence="1">TyrRS</shortName>
    </alternativeName>
</protein>
<accession>Q8KEW9</accession>
<reference key="1">
    <citation type="journal article" date="2002" name="Proc. Natl. Acad. Sci. U.S.A.">
        <title>The complete genome sequence of Chlorobium tepidum TLS, a photosynthetic, anaerobic, green-sulfur bacterium.</title>
        <authorList>
            <person name="Eisen J.A."/>
            <person name="Nelson K.E."/>
            <person name="Paulsen I.T."/>
            <person name="Heidelberg J.F."/>
            <person name="Wu M."/>
            <person name="Dodson R.J."/>
            <person name="DeBoy R.T."/>
            <person name="Gwinn M.L."/>
            <person name="Nelson W.C."/>
            <person name="Haft D.H."/>
            <person name="Hickey E.K."/>
            <person name="Peterson J.D."/>
            <person name="Durkin A.S."/>
            <person name="Kolonay J.F."/>
            <person name="Yang F."/>
            <person name="Holt I.E."/>
            <person name="Umayam L.A."/>
            <person name="Mason T.M."/>
            <person name="Brenner M."/>
            <person name="Shea T.P."/>
            <person name="Parksey D.S."/>
            <person name="Nierman W.C."/>
            <person name="Feldblyum T.V."/>
            <person name="Hansen C.L."/>
            <person name="Craven M.B."/>
            <person name="Radune D."/>
            <person name="Vamathevan J.J."/>
            <person name="Khouri H.M."/>
            <person name="White O."/>
            <person name="Gruber T.M."/>
            <person name="Ketchum K.A."/>
            <person name="Venter J.C."/>
            <person name="Tettelin H."/>
            <person name="Bryant D.A."/>
            <person name="Fraser C.M."/>
        </authorList>
    </citation>
    <scope>NUCLEOTIDE SEQUENCE [LARGE SCALE GENOMIC DNA]</scope>
    <source>
        <strain>ATCC 49652 / DSM 12025 / NBRC 103806 / TLS</strain>
    </source>
</reference>
<comment type="function">
    <text evidence="1">Catalyzes the attachment of tyrosine to tRNA(Tyr) in a two-step reaction: tyrosine is first activated by ATP to form Tyr-AMP and then transferred to the acceptor end of tRNA(Tyr).</text>
</comment>
<comment type="catalytic activity">
    <reaction evidence="1">
        <text>tRNA(Tyr) + L-tyrosine + ATP = L-tyrosyl-tRNA(Tyr) + AMP + diphosphate + H(+)</text>
        <dbReference type="Rhea" id="RHEA:10220"/>
        <dbReference type="Rhea" id="RHEA-COMP:9706"/>
        <dbReference type="Rhea" id="RHEA-COMP:9707"/>
        <dbReference type="ChEBI" id="CHEBI:15378"/>
        <dbReference type="ChEBI" id="CHEBI:30616"/>
        <dbReference type="ChEBI" id="CHEBI:33019"/>
        <dbReference type="ChEBI" id="CHEBI:58315"/>
        <dbReference type="ChEBI" id="CHEBI:78442"/>
        <dbReference type="ChEBI" id="CHEBI:78536"/>
        <dbReference type="ChEBI" id="CHEBI:456215"/>
        <dbReference type="EC" id="6.1.1.1"/>
    </reaction>
</comment>
<comment type="subunit">
    <text evidence="1">Homodimer.</text>
</comment>
<comment type="subcellular location">
    <subcellularLocation>
        <location evidence="1">Cytoplasm</location>
    </subcellularLocation>
</comment>
<comment type="similarity">
    <text evidence="1">Belongs to the class-I aminoacyl-tRNA synthetase family. TyrS type 2 subfamily.</text>
</comment>
<feature type="chain" id="PRO_0000236709" description="Tyrosine--tRNA ligase">
    <location>
        <begin position="1"/>
        <end position="406"/>
    </location>
</feature>
<feature type="domain" description="S4 RNA-binding" evidence="1">
    <location>
        <begin position="339"/>
        <end position="401"/>
    </location>
</feature>
<feature type="short sequence motif" description="'HIGH' region">
    <location>
        <begin position="48"/>
        <end position="57"/>
    </location>
</feature>
<feature type="short sequence motif" description="'KMSKS' region">
    <location>
        <begin position="232"/>
        <end position="236"/>
    </location>
</feature>
<feature type="binding site" evidence="1">
    <location>
        <position position="235"/>
    </location>
    <ligand>
        <name>ATP</name>
        <dbReference type="ChEBI" id="CHEBI:30616"/>
    </ligand>
</feature>
<evidence type="ECO:0000255" key="1">
    <source>
        <dbReference type="HAMAP-Rule" id="MF_02007"/>
    </source>
</evidence>